<feature type="chain" id="PRO_0000163704" description="1-deoxy-D-xylulose 5-phosphate reductoisomerase">
    <location>
        <begin position="1"/>
        <end position="391"/>
    </location>
</feature>
<feature type="binding site" evidence="1">
    <location>
        <position position="17"/>
    </location>
    <ligand>
        <name>NADPH</name>
        <dbReference type="ChEBI" id="CHEBI:57783"/>
    </ligand>
</feature>
<feature type="binding site" evidence="1">
    <location>
        <position position="18"/>
    </location>
    <ligand>
        <name>NADPH</name>
        <dbReference type="ChEBI" id="CHEBI:57783"/>
    </ligand>
</feature>
<feature type="binding site" evidence="1">
    <location>
        <position position="19"/>
    </location>
    <ligand>
        <name>NADPH</name>
        <dbReference type="ChEBI" id="CHEBI:57783"/>
    </ligand>
</feature>
<feature type="binding site" evidence="1">
    <location>
        <position position="20"/>
    </location>
    <ligand>
        <name>NADPH</name>
        <dbReference type="ChEBI" id="CHEBI:57783"/>
    </ligand>
</feature>
<feature type="binding site" evidence="1">
    <location>
        <position position="47"/>
    </location>
    <ligand>
        <name>NADPH</name>
        <dbReference type="ChEBI" id="CHEBI:57783"/>
    </ligand>
</feature>
<feature type="binding site" evidence="1">
    <location>
        <position position="130"/>
    </location>
    <ligand>
        <name>NADPH</name>
        <dbReference type="ChEBI" id="CHEBI:57783"/>
    </ligand>
</feature>
<feature type="binding site" evidence="1">
    <location>
        <position position="131"/>
    </location>
    <ligand>
        <name>1-deoxy-D-xylulose 5-phosphate</name>
        <dbReference type="ChEBI" id="CHEBI:57792"/>
    </ligand>
</feature>
<feature type="binding site" evidence="1">
    <location>
        <position position="132"/>
    </location>
    <ligand>
        <name>NADPH</name>
        <dbReference type="ChEBI" id="CHEBI:57783"/>
    </ligand>
</feature>
<feature type="binding site" evidence="1">
    <location>
        <position position="156"/>
    </location>
    <ligand>
        <name>Mn(2+)</name>
        <dbReference type="ChEBI" id="CHEBI:29035"/>
    </ligand>
</feature>
<feature type="binding site" evidence="1">
    <location>
        <position position="157"/>
    </location>
    <ligand>
        <name>1-deoxy-D-xylulose 5-phosphate</name>
        <dbReference type="ChEBI" id="CHEBI:57792"/>
    </ligand>
</feature>
<feature type="binding site" evidence="1">
    <location>
        <position position="158"/>
    </location>
    <ligand>
        <name>1-deoxy-D-xylulose 5-phosphate</name>
        <dbReference type="ChEBI" id="CHEBI:57792"/>
    </ligand>
</feature>
<feature type="binding site" evidence="1">
    <location>
        <position position="158"/>
    </location>
    <ligand>
        <name>Mn(2+)</name>
        <dbReference type="ChEBI" id="CHEBI:29035"/>
    </ligand>
</feature>
<feature type="binding site" evidence="1">
    <location>
        <position position="182"/>
    </location>
    <ligand>
        <name>1-deoxy-D-xylulose 5-phosphate</name>
        <dbReference type="ChEBI" id="CHEBI:57792"/>
    </ligand>
</feature>
<feature type="binding site" evidence="1">
    <location>
        <position position="205"/>
    </location>
    <ligand>
        <name>1-deoxy-D-xylulose 5-phosphate</name>
        <dbReference type="ChEBI" id="CHEBI:57792"/>
    </ligand>
</feature>
<feature type="binding site" evidence="1">
    <location>
        <position position="211"/>
    </location>
    <ligand>
        <name>NADPH</name>
        <dbReference type="ChEBI" id="CHEBI:57783"/>
    </ligand>
</feature>
<feature type="binding site" evidence="1">
    <location>
        <position position="218"/>
    </location>
    <ligand>
        <name>1-deoxy-D-xylulose 5-phosphate</name>
        <dbReference type="ChEBI" id="CHEBI:57792"/>
    </ligand>
</feature>
<feature type="binding site" evidence="1">
    <location>
        <position position="223"/>
    </location>
    <ligand>
        <name>1-deoxy-D-xylulose 5-phosphate</name>
        <dbReference type="ChEBI" id="CHEBI:57792"/>
    </ligand>
</feature>
<feature type="binding site" evidence="1">
    <location>
        <position position="224"/>
    </location>
    <ligand>
        <name>1-deoxy-D-xylulose 5-phosphate</name>
        <dbReference type="ChEBI" id="CHEBI:57792"/>
    </ligand>
</feature>
<feature type="binding site" evidence="1">
    <location>
        <position position="227"/>
    </location>
    <ligand>
        <name>1-deoxy-D-xylulose 5-phosphate</name>
        <dbReference type="ChEBI" id="CHEBI:57792"/>
    </ligand>
</feature>
<feature type="binding site" evidence="1">
    <location>
        <position position="227"/>
    </location>
    <ligand>
        <name>Mn(2+)</name>
        <dbReference type="ChEBI" id="CHEBI:29035"/>
    </ligand>
</feature>
<comment type="function">
    <text evidence="1">Catalyzes the NADPH-dependent rearrangement and reduction of 1-deoxy-D-xylulose-5-phosphate (DXP) to 2-C-methyl-D-erythritol 4-phosphate (MEP).</text>
</comment>
<comment type="catalytic activity">
    <reaction evidence="1">
        <text>2-C-methyl-D-erythritol 4-phosphate + NADP(+) = 1-deoxy-D-xylulose 5-phosphate + NADPH + H(+)</text>
        <dbReference type="Rhea" id="RHEA:13717"/>
        <dbReference type="ChEBI" id="CHEBI:15378"/>
        <dbReference type="ChEBI" id="CHEBI:57783"/>
        <dbReference type="ChEBI" id="CHEBI:57792"/>
        <dbReference type="ChEBI" id="CHEBI:58262"/>
        <dbReference type="ChEBI" id="CHEBI:58349"/>
        <dbReference type="EC" id="1.1.1.267"/>
    </reaction>
    <physiologicalReaction direction="right-to-left" evidence="1">
        <dbReference type="Rhea" id="RHEA:13719"/>
    </physiologicalReaction>
</comment>
<comment type="cofactor">
    <cofactor evidence="1">
        <name>Mg(2+)</name>
        <dbReference type="ChEBI" id="CHEBI:18420"/>
    </cofactor>
    <cofactor evidence="1">
        <name>Mn(2+)</name>
        <dbReference type="ChEBI" id="CHEBI:29035"/>
    </cofactor>
</comment>
<comment type="pathway">
    <text evidence="1">Isoprenoid biosynthesis; isopentenyl diphosphate biosynthesis via DXP pathway; isopentenyl diphosphate from 1-deoxy-D-xylulose 5-phosphate: step 1/6.</text>
</comment>
<comment type="similarity">
    <text evidence="1">Belongs to the DXR family.</text>
</comment>
<sequence>MASGDDLKRRLTILGSTGSIGTSTLDVIERLGGRDRFEIAALTGNGNIPLLAEQARRIGAELAVTADEDRYGELKDALSGSGIEVAAGRSGLTEAAERDAGWVMAAIVGNAGLGPTLAAARRGADIALANKECLVSAGSLFIDAVAEGGGRLLPVDSEHNAIFQVLENDQRHAVERIVLTASGGPFRTKTLDEMRHVTADVARAHPNWSMGLKISIDSASMFNKALEMIEARHLFRLRPEQIEVIVHPQSVVHSMVGYTDGSVLAQLGCPDMRTAIGYALSYPKRCDLPVERLDFARLARLDFEAPDEVRFPAIKLARRAMEEGGVQGAVLNGAKETALDAFIKGRIGFLAMAEIVEKVMDGLAGLPAATSMDDVFAADERARRAAAEMIR</sequence>
<gene>
    <name evidence="1" type="primary">dxr</name>
    <name type="ordered locus">R02988</name>
    <name type="ORF">SMc03105</name>
</gene>
<proteinExistence type="inferred from homology"/>
<organism>
    <name type="scientific">Rhizobium meliloti (strain 1021)</name>
    <name type="common">Ensifer meliloti</name>
    <name type="synonym">Sinorhizobium meliloti</name>
    <dbReference type="NCBI Taxonomy" id="266834"/>
    <lineage>
        <taxon>Bacteria</taxon>
        <taxon>Pseudomonadati</taxon>
        <taxon>Pseudomonadota</taxon>
        <taxon>Alphaproteobacteria</taxon>
        <taxon>Hyphomicrobiales</taxon>
        <taxon>Rhizobiaceae</taxon>
        <taxon>Sinorhizobium/Ensifer group</taxon>
        <taxon>Sinorhizobium</taxon>
    </lineage>
</organism>
<reference key="1">
    <citation type="journal article" date="2001" name="Proc. Natl. Acad. Sci. U.S.A.">
        <title>Analysis of the chromosome sequence of the legume symbiont Sinorhizobium meliloti strain 1021.</title>
        <authorList>
            <person name="Capela D."/>
            <person name="Barloy-Hubler F."/>
            <person name="Gouzy J."/>
            <person name="Bothe G."/>
            <person name="Ampe F."/>
            <person name="Batut J."/>
            <person name="Boistard P."/>
            <person name="Becker A."/>
            <person name="Boutry M."/>
            <person name="Cadieu E."/>
            <person name="Dreano S."/>
            <person name="Gloux S."/>
            <person name="Godrie T."/>
            <person name="Goffeau A."/>
            <person name="Kahn D."/>
            <person name="Kiss E."/>
            <person name="Lelaure V."/>
            <person name="Masuy D."/>
            <person name="Pohl T."/>
            <person name="Portetelle D."/>
            <person name="Puehler A."/>
            <person name="Purnelle B."/>
            <person name="Ramsperger U."/>
            <person name="Renard C."/>
            <person name="Thebault P."/>
            <person name="Vandenbol M."/>
            <person name="Weidner S."/>
            <person name="Galibert F."/>
        </authorList>
    </citation>
    <scope>NUCLEOTIDE SEQUENCE [LARGE SCALE GENOMIC DNA]</scope>
    <source>
        <strain>1021</strain>
    </source>
</reference>
<reference key="2">
    <citation type="journal article" date="2001" name="Science">
        <title>The composite genome of the legume symbiont Sinorhizobium meliloti.</title>
        <authorList>
            <person name="Galibert F."/>
            <person name="Finan T.M."/>
            <person name="Long S.R."/>
            <person name="Puehler A."/>
            <person name="Abola P."/>
            <person name="Ampe F."/>
            <person name="Barloy-Hubler F."/>
            <person name="Barnett M.J."/>
            <person name="Becker A."/>
            <person name="Boistard P."/>
            <person name="Bothe G."/>
            <person name="Boutry M."/>
            <person name="Bowser L."/>
            <person name="Buhrmester J."/>
            <person name="Cadieu E."/>
            <person name="Capela D."/>
            <person name="Chain P."/>
            <person name="Cowie A."/>
            <person name="Davis R.W."/>
            <person name="Dreano S."/>
            <person name="Federspiel N.A."/>
            <person name="Fisher R.F."/>
            <person name="Gloux S."/>
            <person name="Godrie T."/>
            <person name="Goffeau A."/>
            <person name="Golding B."/>
            <person name="Gouzy J."/>
            <person name="Gurjal M."/>
            <person name="Hernandez-Lucas I."/>
            <person name="Hong A."/>
            <person name="Huizar L."/>
            <person name="Hyman R.W."/>
            <person name="Jones T."/>
            <person name="Kahn D."/>
            <person name="Kahn M.L."/>
            <person name="Kalman S."/>
            <person name="Keating D.H."/>
            <person name="Kiss E."/>
            <person name="Komp C."/>
            <person name="Lelaure V."/>
            <person name="Masuy D."/>
            <person name="Palm C."/>
            <person name="Peck M.C."/>
            <person name="Pohl T.M."/>
            <person name="Portetelle D."/>
            <person name="Purnelle B."/>
            <person name="Ramsperger U."/>
            <person name="Surzycki R."/>
            <person name="Thebault P."/>
            <person name="Vandenbol M."/>
            <person name="Vorhoelter F.J."/>
            <person name="Weidner S."/>
            <person name="Wells D.H."/>
            <person name="Wong K."/>
            <person name="Yeh K.-C."/>
            <person name="Batut J."/>
        </authorList>
    </citation>
    <scope>NUCLEOTIDE SEQUENCE [LARGE SCALE GENOMIC DNA]</scope>
    <source>
        <strain>1021</strain>
    </source>
</reference>
<name>DXR_RHIME</name>
<keyword id="KW-0414">Isoprene biosynthesis</keyword>
<keyword id="KW-0464">Manganese</keyword>
<keyword id="KW-0479">Metal-binding</keyword>
<keyword id="KW-0521">NADP</keyword>
<keyword id="KW-0560">Oxidoreductase</keyword>
<keyword id="KW-1185">Reference proteome</keyword>
<evidence type="ECO:0000255" key="1">
    <source>
        <dbReference type="HAMAP-Rule" id="MF_00183"/>
    </source>
</evidence>
<dbReference type="EC" id="1.1.1.267" evidence="1"/>
<dbReference type="EMBL" id="AL591688">
    <property type="protein sequence ID" value="CAC47567.1"/>
    <property type="molecule type" value="Genomic_DNA"/>
</dbReference>
<dbReference type="RefSeq" id="NP_387094.1">
    <property type="nucleotide sequence ID" value="NC_003047.1"/>
</dbReference>
<dbReference type="RefSeq" id="WP_004435056.1">
    <property type="nucleotide sequence ID" value="NC_003047.1"/>
</dbReference>
<dbReference type="SMR" id="Q92LP6"/>
<dbReference type="EnsemblBacteria" id="CAC47567">
    <property type="protein sequence ID" value="CAC47567"/>
    <property type="gene ID" value="SMc03105"/>
</dbReference>
<dbReference type="KEGG" id="sme:SMc03105"/>
<dbReference type="PATRIC" id="fig|266834.11.peg.4515"/>
<dbReference type="eggNOG" id="COG0743">
    <property type="taxonomic scope" value="Bacteria"/>
</dbReference>
<dbReference type="HOGENOM" id="CLU_035714_4_0_5"/>
<dbReference type="OrthoDB" id="9806546at2"/>
<dbReference type="UniPathway" id="UPA00056">
    <property type="reaction ID" value="UER00092"/>
</dbReference>
<dbReference type="Proteomes" id="UP000001976">
    <property type="component" value="Chromosome"/>
</dbReference>
<dbReference type="GO" id="GO:0030604">
    <property type="term" value="F:1-deoxy-D-xylulose-5-phosphate reductoisomerase activity"/>
    <property type="evidence" value="ECO:0007669"/>
    <property type="project" value="UniProtKB-UniRule"/>
</dbReference>
<dbReference type="GO" id="GO:0030145">
    <property type="term" value="F:manganese ion binding"/>
    <property type="evidence" value="ECO:0007669"/>
    <property type="project" value="TreeGrafter"/>
</dbReference>
<dbReference type="GO" id="GO:0070402">
    <property type="term" value="F:NADPH binding"/>
    <property type="evidence" value="ECO:0007669"/>
    <property type="project" value="InterPro"/>
</dbReference>
<dbReference type="GO" id="GO:0051484">
    <property type="term" value="P:isopentenyl diphosphate biosynthetic process, methylerythritol 4-phosphate pathway involved in terpenoid biosynthetic process"/>
    <property type="evidence" value="ECO:0007669"/>
    <property type="project" value="TreeGrafter"/>
</dbReference>
<dbReference type="FunFam" id="3.40.50.720:FF:000045">
    <property type="entry name" value="1-deoxy-D-xylulose 5-phosphate reductoisomerase"/>
    <property type="match status" value="1"/>
</dbReference>
<dbReference type="Gene3D" id="1.10.1740.10">
    <property type="match status" value="1"/>
</dbReference>
<dbReference type="Gene3D" id="3.40.50.720">
    <property type="entry name" value="NAD(P)-binding Rossmann-like Domain"/>
    <property type="match status" value="1"/>
</dbReference>
<dbReference type="HAMAP" id="MF_00183">
    <property type="entry name" value="DXP_reductoisom"/>
    <property type="match status" value="1"/>
</dbReference>
<dbReference type="InterPro" id="IPR003821">
    <property type="entry name" value="DXP_reductoisomerase"/>
</dbReference>
<dbReference type="InterPro" id="IPR013644">
    <property type="entry name" value="DXP_reductoisomerase_C"/>
</dbReference>
<dbReference type="InterPro" id="IPR013512">
    <property type="entry name" value="DXP_reductoisomerase_N"/>
</dbReference>
<dbReference type="InterPro" id="IPR026877">
    <property type="entry name" value="DXPR_C"/>
</dbReference>
<dbReference type="InterPro" id="IPR036169">
    <property type="entry name" value="DXPR_C_sf"/>
</dbReference>
<dbReference type="InterPro" id="IPR036291">
    <property type="entry name" value="NAD(P)-bd_dom_sf"/>
</dbReference>
<dbReference type="NCBIfam" id="TIGR00243">
    <property type="entry name" value="Dxr"/>
    <property type="match status" value="1"/>
</dbReference>
<dbReference type="PANTHER" id="PTHR30525">
    <property type="entry name" value="1-DEOXY-D-XYLULOSE 5-PHOSPHATE REDUCTOISOMERASE"/>
    <property type="match status" value="1"/>
</dbReference>
<dbReference type="PANTHER" id="PTHR30525:SF0">
    <property type="entry name" value="1-DEOXY-D-XYLULOSE 5-PHOSPHATE REDUCTOISOMERASE, CHLOROPLASTIC"/>
    <property type="match status" value="1"/>
</dbReference>
<dbReference type="Pfam" id="PF08436">
    <property type="entry name" value="DXP_redisom_C"/>
    <property type="match status" value="1"/>
</dbReference>
<dbReference type="Pfam" id="PF02670">
    <property type="entry name" value="DXP_reductoisom"/>
    <property type="match status" value="1"/>
</dbReference>
<dbReference type="Pfam" id="PF13288">
    <property type="entry name" value="DXPR_C"/>
    <property type="match status" value="1"/>
</dbReference>
<dbReference type="PIRSF" id="PIRSF006205">
    <property type="entry name" value="Dxp_reductismrs"/>
    <property type="match status" value="1"/>
</dbReference>
<dbReference type="SUPFAM" id="SSF69055">
    <property type="entry name" value="1-deoxy-D-xylulose-5-phosphate reductoisomerase, C-terminal domain"/>
    <property type="match status" value="1"/>
</dbReference>
<dbReference type="SUPFAM" id="SSF55347">
    <property type="entry name" value="Glyceraldehyde-3-phosphate dehydrogenase-like, C-terminal domain"/>
    <property type="match status" value="1"/>
</dbReference>
<dbReference type="SUPFAM" id="SSF51735">
    <property type="entry name" value="NAD(P)-binding Rossmann-fold domains"/>
    <property type="match status" value="1"/>
</dbReference>
<protein>
    <recommendedName>
        <fullName evidence="1">1-deoxy-D-xylulose 5-phosphate reductoisomerase</fullName>
        <shortName evidence="1">DXP reductoisomerase</shortName>
        <ecNumber evidence="1">1.1.1.267</ecNumber>
    </recommendedName>
    <alternativeName>
        <fullName evidence="1">1-deoxyxylulose-5-phosphate reductoisomerase</fullName>
    </alternativeName>
    <alternativeName>
        <fullName evidence="1">2-C-methyl-D-erythritol 4-phosphate synthase</fullName>
    </alternativeName>
</protein>
<accession>Q92LP6</accession>